<evidence type="ECO:0000250" key="1">
    <source>
        <dbReference type="UniProtKB" id="O77410"/>
    </source>
</evidence>
<evidence type="ECO:0000255" key="2">
    <source>
        <dbReference type="HAMAP-Rule" id="MF_03004"/>
    </source>
</evidence>
<evidence type="ECO:0000255" key="3">
    <source>
        <dbReference type="PROSITE-ProRule" id="PRU01185"/>
    </source>
</evidence>
<name>EIF3E_DROYA</name>
<feature type="chain" id="PRO_0000365974" description="Eukaryotic translation initiation factor 3 subunit E">
    <location>
        <begin position="1"/>
        <end position="435"/>
    </location>
</feature>
<feature type="domain" description="PCI" evidence="3">
    <location>
        <begin position="219"/>
        <end position="392"/>
    </location>
</feature>
<organism>
    <name type="scientific">Drosophila yakuba</name>
    <name type="common">Fruit fly</name>
    <dbReference type="NCBI Taxonomy" id="7245"/>
    <lineage>
        <taxon>Eukaryota</taxon>
        <taxon>Metazoa</taxon>
        <taxon>Ecdysozoa</taxon>
        <taxon>Arthropoda</taxon>
        <taxon>Hexapoda</taxon>
        <taxon>Insecta</taxon>
        <taxon>Pterygota</taxon>
        <taxon>Neoptera</taxon>
        <taxon>Endopterygota</taxon>
        <taxon>Diptera</taxon>
        <taxon>Brachycera</taxon>
        <taxon>Muscomorpha</taxon>
        <taxon>Ephydroidea</taxon>
        <taxon>Drosophilidae</taxon>
        <taxon>Drosophila</taxon>
        <taxon>Sophophora</taxon>
    </lineage>
</organism>
<keyword id="KW-0963">Cytoplasm</keyword>
<keyword id="KW-0396">Initiation factor</keyword>
<keyword id="KW-0648">Protein biosynthesis</keyword>
<gene>
    <name type="primary">eIF3-S6</name>
    <name type="synonym">Int6</name>
    <name type="ORF">GE22189</name>
</gene>
<dbReference type="EMBL" id="CM000159">
    <property type="protein sequence ID" value="EDW94796.1"/>
    <property type="molecule type" value="Genomic_DNA"/>
</dbReference>
<dbReference type="SMR" id="B4PK98"/>
<dbReference type="EnsemblMetazoa" id="FBtr0268707">
    <property type="protein sequence ID" value="FBpp0267199"/>
    <property type="gene ID" value="FBgn0068137"/>
</dbReference>
<dbReference type="EnsemblMetazoa" id="XM_002095048.3">
    <property type="protein sequence ID" value="XP_002095084.1"/>
    <property type="gene ID" value="LOC6534406"/>
</dbReference>
<dbReference type="GeneID" id="6534406"/>
<dbReference type="KEGG" id="dya:Dyak_GE22189"/>
<dbReference type="CTD" id="3646"/>
<dbReference type="eggNOG" id="KOG2758">
    <property type="taxonomic scope" value="Eukaryota"/>
</dbReference>
<dbReference type="HOGENOM" id="CLU_031132_0_0_1"/>
<dbReference type="OMA" id="NCPWILR"/>
<dbReference type="OrthoDB" id="417252at2759"/>
<dbReference type="PhylomeDB" id="B4PK98"/>
<dbReference type="Proteomes" id="UP000002282">
    <property type="component" value="Chromosome 3L"/>
</dbReference>
<dbReference type="GO" id="GO:0016282">
    <property type="term" value="C:eukaryotic 43S preinitiation complex"/>
    <property type="evidence" value="ECO:0007669"/>
    <property type="project" value="UniProtKB-UniRule"/>
</dbReference>
<dbReference type="GO" id="GO:0033290">
    <property type="term" value="C:eukaryotic 48S preinitiation complex"/>
    <property type="evidence" value="ECO:0007669"/>
    <property type="project" value="UniProtKB-UniRule"/>
</dbReference>
<dbReference type="GO" id="GO:0071540">
    <property type="term" value="C:eukaryotic translation initiation factor 3 complex, eIF3e"/>
    <property type="evidence" value="ECO:0007669"/>
    <property type="project" value="UniProtKB-UniRule"/>
</dbReference>
<dbReference type="GO" id="GO:0043231">
    <property type="term" value="C:intracellular membrane-bounded organelle"/>
    <property type="evidence" value="ECO:0007669"/>
    <property type="project" value="EnsemblMetazoa"/>
</dbReference>
<dbReference type="GO" id="GO:0003743">
    <property type="term" value="F:translation initiation factor activity"/>
    <property type="evidence" value="ECO:0007669"/>
    <property type="project" value="UniProtKB-UniRule"/>
</dbReference>
<dbReference type="GO" id="GO:0001732">
    <property type="term" value="P:formation of cytoplasmic translation initiation complex"/>
    <property type="evidence" value="ECO:0007669"/>
    <property type="project" value="UniProtKB-UniRule"/>
</dbReference>
<dbReference type="CDD" id="cd21378">
    <property type="entry name" value="eIF3E"/>
    <property type="match status" value="1"/>
</dbReference>
<dbReference type="HAMAP" id="MF_03004">
    <property type="entry name" value="eIF3e"/>
    <property type="match status" value="1"/>
</dbReference>
<dbReference type="InterPro" id="IPR016650">
    <property type="entry name" value="eIF3e"/>
</dbReference>
<dbReference type="InterPro" id="IPR019010">
    <property type="entry name" value="eIF3e_N"/>
</dbReference>
<dbReference type="InterPro" id="IPR000717">
    <property type="entry name" value="PCI_dom"/>
</dbReference>
<dbReference type="InterPro" id="IPR036390">
    <property type="entry name" value="WH_DNA-bd_sf"/>
</dbReference>
<dbReference type="PANTHER" id="PTHR10317">
    <property type="entry name" value="EUKARYOTIC TRANSLATION INITIATION FACTOR 3 SUBUNIT E"/>
    <property type="match status" value="1"/>
</dbReference>
<dbReference type="Pfam" id="PF09440">
    <property type="entry name" value="eIF3_N"/>
    <property type="match status" value="1"/>
</dbReference>
<dbReference type="Pfam" id="PF01399">
    <property type="entry name" value="PCI"/>
    <property type="match status" value="1"/>
</dbReference>
<dbReference type="PIRSF" id="PIRSF016255">
    <property type="entry name" value="eIF3e_su6"/>
    <property type="match status" value="1"/>
</dbReference>
<dbReference type="SMART" id="SM01186">
    <property type="entry name" value="eIF3_N"/>
    <property type="match status" value="1"/>
</dbReference>
<dbReference type="SMART" id="SM00088">
    <property type="entry name" value="PINT"/>
    <property type="match status" value="1"/>
</dbReference>
<dbReference type="SUPFAM" id="SSF46785">
    <property type="entry name" value="Winged helix' DNA-binding domain"/>
    <property type="match status" value="1"/>
</dbReference>
<dbReference type="PROSITE" id="PS50250">
    <property type="entry name" value="PCI"/>
    <property type="match status" value="1"/>
</dbReference>
<protein>
    <recommendedName>
        <fullName evidence="2">Eukaryotic translation initiation factor 3 subunit E</fullName>
        <shortName evidence="2">eIF3e</shortName>
    </recommendedName>
    <alternativeName>
        <fullName evidence="2">Eukaryotic translation initiation factor 3 subunit 6</fullName>
    </alternativeName>
</protein>
<accession>B4PK98</accession>
<reference key="1">
    <citation type="journal article" date="2007" name="Nature">
        <title>Evolution of genes and genomes on the Drosophila phylogeny.</title>
        <authorList>
            <consortium name="Drosophila 12 genomes consortium"/>
        </authorList>
    </citation>
    <scope>NUCLEOTIDE SEQUENCE [LARGE SCALE GENOMIC DNA]</scope>
    <source>
        <strain>Tai18E2 / Tucson 14021-0261.01</strain>
    </source>
</reference>
<comment type="function">
    <text evidence="2">Component of the eukaryotic translation initiation factor 3 (eIF-3) complex, which is involved in protein synthesis of a specialized repertoire of mRNAs and, together with other initiation factors, stimulates binding of mRNA and methionyl-tRNAi to the 40S ribosome. The eIF-3 complex specifically targets and initiates translation of a subset of mRNAs involved in cell proliferation.</text>
</comment>
<comment type="subunit">
    <text evidence="1 2">Component of the eukaryotic translation initiation factor 3 (eIF-3) complex. The eIF-3 complex interacts with pix. Interacts with mxt (By similarity).</text>
</comment>
<comment type="subcellular location">
    <subcellularLocation>
        <location evidence="2">Cytoplasm</location>
    </subcellularLocation>
</comment>
<comment type="similarity">
    <text evidence="2">Belongs to the eIF-3 subunit E family.</text>
</comment>
<sequence>MANFDLTRINCQFLDRHLTFPLLEFLCGKEIYNQQELLEYILETVNKTNMIDYTMDTRKRLNLSQEMPEELVQRKAEVLATLKQLQNEVAPIMKATDILKNGESMKDSKTFVNALQKDYNFKVEHLESAYKLAKYLYECGNYQESTSYLYFCLIVMSPNDKNYLNVLWGKLAAEILTLNWNTALEDLTRLRDYIDSANFSTIQALQQRTWLIHWSVLVFFNHPKGRDLIIEMFLYKPLYLNAIQTMCPHIMRYLATAVVINRTRRNALKDLIKVIQQESYTYRDPITEFLECLYVNFDFEGARLKLHECQTVILNDFFIVACLNEFVEDARLMIFETFCRIHQCITISMLADKLNMKPNEAECWIVNLIRNARLNAKIDSKLGHVVMGTQPLSPYQQLVEKIDSLSMRSEHLAGLIERKSKQKQNQESADSWKYY</sequence>
<proteinExistence type="inferred from homology"/>